<dbReference type="EC" id="5.3.1.12" evidence="1"/>
<dbReference type="EMBL" id="AE005174">
    <property type="protein sequence ID" value="AAG58225.1"/>
    <property type="molecule type" value="Genomic_DNA"/>
</dbReference>
<dbReference type="EMBL" id="BA000007">
    <property type="protein sequence ID" value="BAB37397.1"/>
    <property type="molecule type" value="Genomic_DNA"/>
</dbReference>
<dbReference type="PIR" id="E85970">
    <property type="entry name" value="E85970"/>
</dbReference>
<dbReference type="PIR" id="F91125">
    <property type="entry name" value="F91125"/>
</dbReference>
<dbReference type="RefSeq" id="NP_312001.1">
    <property type="nucleotide sequence ID" value="NC_002695.1"/>
</dbReference>
<dbReference type="RefSeq" id="WP_000187445.1">
    <property type="nucleotide sequence ID" value="NZ_VOAI01000009.1"/>
</dbReference>
<dbReference type="SMR" id="Q8XAI7"/>
<dbReference type="STRING" id="155864.Z4445"/>
<dbReference type="GeneID" id="916193"/>
<dbReference type="KEGG" id="ece:Z4445"/>
<dbReference type="KEGG" id="ecs:ECs_3974"/>
<dbReference type="PATRIC" id="fig|386585.9.peg.4148"/>
<dbReference type="eggNOG" id="COG1904">
    <property type="taxonomic scope" value="Bacteria"/>
</dbReference>
<dbReference type="HOGENOM" id="CLU_044465_1_0_6"/>
<dbReference type="OMA" id="WRPDKAM"/>
<dbReference type="UniPathway" id="UPA00246"/>
<dbReference type="Proteomes" id="UP000000558">
    <property type="component" value="Chromosome"/>
</dbReference>
<dbReference type="Proteomes" id="UP000002519">
    <property type="component" value="Chromosome"/>
</dbReference>
<dbReference type="GO" id="GO:0008880">
    <property type="term" value="F:glucuronate isomerase activity"/>
    <property type="evidence" value="ECO:0007669"/>
    <property type="project" value="UniProtKB-UniRule"/>
</dbReference>
<dbReference type="GO" id="GO:0019698">
    <property type="term" value="P:D-galacturonate catabolic process"/>
    <property type="evidence" value="ECO:0007669"/>
    <property type="project" value="TreeGrafter"/>
</dbReference>
<dbReference type="GO" id="GO:0042840">
    <property type="term" value="P:D-glucuronate catabolic process"/>
    <property type="evidence" value="ECO:0007669"/>
    <property type="project" value="TreeGrafter"/>
</dbReference>
<dbReference type="FunFam" id="1.10.2020.10:FF:000001">
    <property type="entry name" value="Uronate isomerase"/>
    <property type="match status" value="1"/>
</dbReference>
<dbReference type="Gene3D" id="3.20.20.140">
    <property type="entry name" value="Metal-dependent hydrolases"/>
    <property type="match status" value="1"/>
</dbReference>
<dbReference type="Gene3D" id="1.10.2020.10">
    <property type="entry name" value="uronate isomerase, domain 2, chain A"/>
    <property type="match status" value="1"/>
</dbReference>
<dbReference type="HAMAP" id="MF_00675">
    <property type="entry name" value="UxaC"/>
    <property type="match status" value="1"/>
</dbReference>
<dbReference type="InterPro" id="IPR032466">
    <property type="entry name" value="Metal_Hydrolase"/>
</dbReference>
<dbReference type="InterPro" id="IPR003766">
    <property type="entry name" value="Uronate_isomerase"/>
</dbReference>
<dbReference type="NCBIfam" id="NF002794">
    <property type="entry name" value="PRK02925.1"/>
    <property type="match status" value="1"/>
</dbReference>
<dbReference type="PANTHER" id="PTHR30068">
    <property type="entry name" value="URONATE ISOMERASE"/>
    <property type="match status" value="1"/>
</dbReference>
<dbReference type="PANTHER" id="PTHR30068:SF4">
    <property type="entry name" value="URONATE ISOMERASE"/>
    <property type="match status" value="1"/>
</dbReference>
<dbReference type="Pfam" id="PF02614">
    <property type="entry name" value="UxaC"/>
    <property type="match status" value="1"/>
</dbReference>
<dbReference type="SUPFAM" id="SSF51556">
    <property type="entry name" value="Metallo-dependent hydrolases"/>
    <property type="match status" value="1"/>
</dbReference>
<gene>
    <name evidence="1" type="primary">uxaC</name>
    <name type="ordered locus">Z4445</name>
    <name type="ordered locus">ECs3974</name>
</gene>
<organism>
    <name type="scientific">Escherichia coli O157:H7</name>
    <dbReference type="NCBI Taxonomy" id="83334"/>
    <lineage>
        <taxon>Bacteria</taxon>
        <taxon>Pseudomonadati</taxon>
        <taxon>Pseudomonadota</taxon>
        <taxon>Gammaproteobacteria</taxon>
        <taxon>Enterobacterales</taxon>
        <taxon>Enterobacteriaceae</taxon>
        <taxon>Escherichia</taxon>
    </lineage>
</organism>
<evidence type="ECO:0000255" key="1">
    <source>
        <dbReference type="HAMAP-Rule" id="MF_00675"/>
    </source>
</evidence>
<name>UXAC_ECO57</name>
<proteinExistence type="inferred from homology"/>
<protein>
    <recommendedName>
        <fullName evidence="1">Uronate isomerase</fullName>
        <ecNumber evidence="1">5.3.1.12</ecNumber>
    </recommendedName>
    <alternativeName>
        <fullName evidence="1">Glucuronate isomerase</fullName>
    </alternativeName>
    <alternativeName>
        <fullName evidence="1">Uronic isomerase</fullName>
    </alternativeName>
</protein>
<sequence>MTPFMTEDFLLDTEFARRLYHDYAKDQPIFDYHCHLPPQQIAEDYRFKNLYDIWLKGDHYKWRAMRTNGVAERLCTGDASDREKFDAWAATVPHTIGNPLYHWTHLELRRPFGITGKLLSPSTADEIWNECNELLAQDNFSARGIMQQMNVKMVGTTDDPIDSLEHHAEIAKDGSFTIKVLPSWRPDKAFNIEQATFNDYMAKLGEVSDTDIRRFADLQTALTKRLDHFAAHGCKVSDHALDVVMFAEANEAELDSILARRLAGETLSEHEVAQFKTAVLVFLGAEYARRGWVQQYHIGALRNNNLRQFKLLGPDVGFDSINDRPMAEELSKLLSKQNEENLLPKTILYCLNPRDNEVLGTMSGNFQGEGMPGKMQFGSGWWFNDQKDGMERQMTQLAQLGLLSRFVGMLTDSRSFLSYTRHEYFRRILCQMIGRWVEAGEAPADINLLGEMVKNICFNNARDYFAIELN</sequence>
<keyword id="KW-0413">Isomerase</keyword>
<keyword id="KW-1185">Reference proteome</keyword>
<feature type="chain" id="PRO_0000172772" description="Uronate isomerase">
    <location>
        <begin position="1"/>
        <end position="470"/>
    </location>
</feature>
<comment type="catalytic activity">
    <reaction evidence="1">
        <text>D-glucuronate = D-fructuronate</text>
        <dbReference type="Rhea" id="RHEA:13049"/>
        <dbReference type="ChEBI" id="CHEBI:58720"/>
        <dbReference type="ChEBI" id="CHEBI:59863"/>
        <dbReference type="EC" id="5.3.1.12"/>
    </reaction>
</comment>
<comment type="catalytic activity">
    <reaction evidence="1">
        <text>aldehydo-D-galacturonate = keto-D-tagaturonate</text>
        <dbReference type="Rhea" id="RHEA:27702"/>
        <dbReference type="ChEBI" id="CHEBI:12952"/>
        <dbReference type="ChEBI" id="CHEBI:17886"/>
        <dbReference type="EC" id="5.3.1.12"/>
    </reaction>
</comment>
<comment type="pathway">
    <text evidence="1">Carbohydrate metabolism; pentose and glucuronate interconversion.</text>
</comment>
<comment type="similarity">
    <text evidence="1">Belongs to the metallo-dependent hydrolases superfamily. Uronate isomerase family.</text>
</comment>
<accession>Q8XAI7</accession>
<reference key="1">
    <citation type="journal article" date="2001" name="Nature">
        <title>Genome sequence of enterohaemorrhagic Escherichia coli O157:H7.</title>
        <authorList>
            <person name="Perna N.T."/>
            <person name="Plunkett G. III"/>
            <person name="Burland V."/>
            <person name="Mau B."/>
            <person name="Glasner J.D."/>
            <person name="Rose D.J."/>
            <person name="Mayhew G.F."/>
            <person name="Evans P.S."/>
            <person name="Gregor J."/>
            <person name="Kirkpatrick H.A."/>
            <person name="Posfai G."/>
            <person name="Hackett J."/>
            <person name="Klink S."/>
            <person name="Boutin A."/>
            <person name="Shao Y."/>
            <person name="Miller L."/>
            <person name="Grotbeck E.J."/>
            <person name="Davis N.W."/>
            <person name="Lim A."/>
            <person name="Dimalanta E.T."/>
            <person name="Potamousis K."/>
            <person name="Apodaca J."/>
            <person name="Anantharaman T.S."/>
            <person name="Lin J."/>
            <person name="Yen G."/>
            <person name="Schwartz D.C."/>
            <person name="Welch R.A."/>
            <person name="Blattner F.R."/>
        </authorList>
    </citation>
    <scope>NUCLEOTIDE SEQUENCE [LARGE SCALE GENOMIC DNA]</scope>
    <source>
        <strain>O157:H7 / EDL933 / ATCC 700927 / EHEC</strain>
    </source>
</reference>
<reference key="2">
    <citation type="journal article" date="2001" name="DNA Res.">
        <title>Complete genome sequence of enterohemorrhagic Escherichia coli O157:H7 and genomic comparison with a laboratory strain K-12.</title>
        <authorList>
            <person name="Hayashi T."/>
            <person name="Makino K."/>
            <person name="Ohnishi M."/>
            <person name="Kurokawa K."/>
            <person name="Ishii K."/>
            <person name="Yokoyama K."/>
            <person name="Han C.-G."/>
            <person name="Ohtsubo E."/>
            <person name="Nakayama K."/>
            <person name="Murata T."/>
            <person name="Tanaka M."/>
            <person name="Tobe T."/>
            <person name="Iida T."/>
            <person name="Takami H."/>
            <person name="Honda T."/>
            <person name="Sasakawa C."/>
            <person name="Ogasawara N."/>
            <person name="Yasunaga T."/>
            <person name="Kuhara S."/>
            <person name="Shiba T."/>
            <person name="Hattori M."/>
            <person name="Shinagawa H."/>
        </authorList>
    </citation>
    <scope>NUCLEOTIDE SEQUENCE [LARGE SCALE GENOMIC DNA]</scope>
    <source>
        <strain>O157:H7 / Sakai / RIMD 0509952 / EHEC</strain>
    </source>
</reference>